<organism>
    <name type="scientific">Schizosaccharomyces pombe (strain 972 / ATCC 24843)</name>
    <name type="common">Fission yeast</name>
    <dbReference type="NCBI Taxonomy" id="284812"/>
    <lineage>
        <taxon>Eukaryota</taxon>
        <taxon>Fungi</taxon>
        <taxon>Dikarya</taxon>
        <taxon>Ascomycota</taxon>
        <taxon>Taphrinomycotina</taxon>
        <taxon>Schizosaccharomycetes</taxon>
        <taxon>Schizosaccharomycetales</taxon>
        <taxon>Schizosaccharomycetaceae</taxon>
        <taxon>Schizosaccharomyces</taxon>
    </lineage>
</organism>
<name>HPC2_SCHPO</name>
<evidence type="ECO:0000250" key="1"/>
<evidence type="ECO:0000256" key="2">
    <source>
        <dbReference type="SAM" id="MobiDB-lite"/>
    </source>
</evidence>
<evidence type="ECO:0000269" key="3">
    <source>
    </source>
</evidence>
<evidence type="ECO:0000269" key="4">
    <source>
    </source>
</evidence>
<evidence type="ECO:0000305" key="5"/>
<feature type="chain" id="PRO_0000373989" description="Histone promoter control protein 2">
    <location>
        <begin position="1"/>
        <end position="338"/>
    </location>
</feature>
<feature type="region of interest" description="Disordered" evidence="2">
    <location>
        <begin position="38"/>
        <end position="85"/>
    </location>
</feature>
<feature type="region of interest" description="Disordered" evidence="2">
    <location>
        <begin position="134"/>
        <end position="301"/>
    </location>
</feature>
<feature type="region of interest" description="Disordered" evidence="2">
    <location>
        <begin position="314"/>
        <end position="338"/>
    </location>
</feature>
<feature type="compositionally biased region" description="Low complexity" evidence="2">
    <location>
        <begin position="152"/>
        <end position="165"/>
    </location>
</feature>
<feature type="compositionally biased region" description="Basic and acidic residues" evidence="2">
    <location>
        <begin position="193"/>
        <end position="223"/>
    </location>
</feature>
<feature type="compositionally biased region" description="Polar residues" evidence="2">
    <location>
        <begin position="276"/>
        <end position="301"/>
    </location>
</feature>
<feature type="compositionally biased region" description="Basic and acidic residues" evidence="2">
    <location>
        <begin position="321"/>
        <end position="330"/>
    </location>
</feature>
<feature type="modified residue" description="Phosphoserine" evidence="4">
    <location>
        <position position="175"/>
    </location>
</feature>
<dbReference type="EMBL" id="CU329671">
    <property type="protein sequence ID" value="CAA17036.1"/>
    <property type="molecule type" value="Genomic_DNA"/>
</dbReference>
<dbReference type="PIR" id="T40774">
    <property type="entry name" value="T40774"/>
</dbReference>
<dbReference type="RefSeq" id="NP_595268.1">
    <property type="nucleotide sequence ID" value="NM_001021175.2"/>
</dbReference>
<dbReference type="BioGRID" id="277797">
    <property type="interactions" value="478"/>
</dbReference>
<dbReference type="STRING" id="284812.O43083"/>
<dbReference type="iPTMnet" id="O43083"/>
<dbReference type="PaxDb" id="4896-SPBC947.08c.1"/>
<dbReference type="EnsemblFungi" id="SPBC947.08c.1">
    <property type="protein sequence ID" value="SPBC947.08c.1:pep"/>
    <property type="gene ID" value="SPBC947.08c"/>
</dbReference>
<dbReference type="GeneID" id="2541284"/>
<dbReference type="KEGG" id="spo:2541284"/>
<dbReference type="PomBase" id="SPBC947.08c"/>
<dbReference type="VEuPathDB" id="FungiDB:SPBC947.08c"/>
<dbReference type="eggNOG" id="ENOG502RG9A">
    <property type="taxonomic scope" value="Eukaryota"/>
</dbReference>
<dbReference type="HOGENOM" id="CLU_070878_0_0_1"/>
<dbReference type="InParanoid" id="O43083"/>
<dbReference type="OMA" id="AYGPSIN"/>
<dbReference type="PRO" id="PR:O43083"/>
<dbReference type="Proteomes" id="UP000002485">
    <property type="component" value="Chromosome II"/>
</dbReference>
<dbReference type="GO" id="GO:0000785">
    <property type="term" value="C:chromatin"/>
    <property type="evidence" value="ECO:0000305"/>
    <property type="project" value="PomBase"/>
</dbReference>
<dbReference type="GO" id="GO:0000417">
    <property type="term" value="C:HIR complex"/>
    <property type="evidence" value="ECO:0000314"/>
    <property type="project" value="PomBase"/>
</dbReference>
<dbReference type="GO" id="GO:0005634">
    <property type="term" value="C:nucleus"/>
    <property type="evidence" value="ECO:0007005"/>
    <property type="project" value="PomBase"/>
</dbReference>
<dbReference type="GO" id="GO:0006325">
    <property type="term" value="P:chromatin organization"/>
    <property type="evidence" value="ECO:0000353"/>
    <property type="project" value="PomBase"/>
</dbReference>
<dbReference type="InterPro" id="IPR014840">
    <property type="entry name" value="HRD"/>
</dbReference>
<dbReference type="Pfam" id="PF08729">
    <property type="entry name" value="HUN"/>
    <property type="match status" value="1"/>
</dbReference>
<keyword id="KW-0156">Chromatin regulator</keyword>
<keyword id="KW-0539">Nucleus</keyword>
<keyword id="KW-0597">Phosphoprotein</keyword>
<keyword id="KW-1185">Reference proteome</keyword>
<keyword id="KW-0804">Transcription</keyword>
<keyword id="KW-0805">Transcription regulation</keyword>
<reference key="1">
    <citation type="journal article" date="2002" name="Nature">
        <title>The genome sequence of Schizosaccharomyces pombe.</title>
        <authorList>
            <person name="Wood V."/>
            <person name="Gwilliam R."/>
            <person name="Rajandream M.A."/>
            <person name="Lyne M.H."/>
            <person name="Lyne R."/>
            <person name="Stewart A."/>
            <person name="Sgouros J.G."/>
            <person name="Peat N."/>
            <person name="Hayles J."/>
            <person name="Baker S.G."/>
            <person name="Basham D."/>
            <person name="Bowman S."/>
            <person name="Brooks K."/>
            <person name="Brown D."/>
            <person name="Brown S."/>
            <person name="Chillingworth T."/>
            <person name="Churcher C.M."/>
            <person name="Collins M."/>
            <person name="Connor R."/>
            <person name="Cronin A."/>
            <person name="Davis P."/>
            <person name="Feltwell T."/>
            <person name="Fraser A."/>
            <person name="Gentles S."/>
            <person name="Goble A."/>
            <person name="Hamlin N."/>
            <person name="Harris D.E."/>
            <person name="Hidalgo J."/>
            <person name="Hodgson G."/>
            <person name="Holroyd S."/>
            <person name="Hornsby T."/>
            <person name="Howarth S."/>
            <person name="Huckle E.J."/>
            <person name="Hunt S."/>
            <person name="Jagels K."/>
            <person name="James K.D."/>
            <person name="Jones L."/>
            <person name="Jones M."/>
            <person name="Leather S."/>
            <person name="McDonald S."/>
            <person name="McLean J."/>
            <person name="Mooney P."/>
            <person name="Moule S."/>
            <person name="Mungall K.L."/>
            <person name="Murphy L.D."/>
            <person name="Niblett D."/>
            <person name="Odell C."/>
            <person name="Oliver K."/>
            <person name="O'Neil S."/>
            <person name="Pearson D."/>
            <person name="Quail M.A."/>
            <person name="Rabbinowitsch E."/>
            <person name="Rutherford K.M."/>
            <person name="Rutter S."/>
            <person name="Saunders D."/>
            <person name="Seeger K."/>
            <person name="Sharp S."/>
            <person name="Skelton J."/>
            <person name="Simmonds M.N."/>
            <person name="Squares R."/>
            <person name="Squares S."/>
            <person name="Stevens K."/>
            <person name="Taylor K."/>
            <person name="Taylor R.G."/>
            <person name="Tivey A."/>
            <person name="Walsh S.V."/>
            <person name="Warren T."/>
            <person name="Whitehead S."/>
            <person name="Woodward J.R."/>
            <person name="Volckaert G."/>
            <person name="Aert R."/>
            <person name="Robben J."/>
            <person name="Grymonprez B."/>
            <person name="Weltjens I."/>
            <person name="Vanstreels E."/>
            <person name="Rieger M."/>
            <person name="Schaefer M."/>
            <person name="Mueller-Auer S."/>
            <person name="Gabel C."/>
            <person name="Fuchs M."/>
            <person name="Duesterhoeft A."/>
            <person name="Fritzc C."/>
            <person name="Holzer E."/>
            <person name="Moestl D."/>
            <person name="Hilbert H."/>
            <person name="Borzym K."/>
            <person name="Langer I."/>
            <person name="Beck A."/>
            <person name="Lehrach H."/>
            <person name="Reinhardt R."/>
            <person name="Pohl T.M."/>
            <person name="Eger P."/>
            <person name="Zimmermann W."/>
            <person name="Wedler H."/>
            <person name="Wambutt R."/>
            <person name="Purnelle B."/>
            <person name="Goffeau A."/>
            <person name="Cadieu E."/>
            <person name="Dreano S."/>
            <person name="Gloux S."/>
            <person name="Lelaure V."/>
            <person name="Mottier S."/>
            <person name="Galibert F."/>
            <person name="Aves S.J."/>
            <person name="Xiang Z."/>
            <person name="Hunt C."/>
            <person name="Moore K."/>
            <person name="Hurst S.M."/>
            <person name="Lucas M."/>
            <person name="Rochet M."/>
            <person name="Gaillardin C."/>
            <person name="Tallada V.A."/>
            <person name="Garzon A."/>
            <person name="Thode G."/>
            <person name="Daga R.R."/>
            <person name="Cruzado L."/>
            <person name="Jimenez J."/>
            <person name="Sanchez M."/>
            <person name="del Rey F."/>
            <person name="Benito J."/>
            <person name="Dominguez A."/>
            <person name="Revuelta J.L."/>
            <person name="Moreno S."/>
            <person name="Armstrong J."/>
            <person name="Forsburg S.L."/>
            <person name="Cerutti L."/>
            <person name="Lowe T."/>
            <person name="McCombie W.R."/>
            <person name="Paulsen I."/>
            <person name="Potashkin J."/>
            <person name="Shpakovski G.V."/>
            <person name="Ussery D."/>
            <person name="Barrell B.G."/>
            <person name="Nurse P."/>
        </authorList>
    </citation>
    <scope>NUCLEOTIDE SEQUENCE [LARGE SCALE GENOMIC DNA]</scope>
    <source>
        <strain>972 / ATCC 24843</strain>
    </source>
</reference>
<reference key="2">
    <citation type="journal article" date="2006" name="Nat. Biotechnol.">
        <title>ORFeome cloning and global analysis of protein localization in the fission yeast Schizosaccharomyces pombe.</title>
        <authorList>
            <person name="Matsuyama A."/>
            <person name="Arai R."/>
            <person name="Yashiroda Y."/>
            <person name="Shirai A."/>
            <person name="Kamata A."/>
            <person name="Sekido S."/>
            <person name="Kobayashi Y."/>
            <person name="Hashimoto A."/>
            <person name="Hamamoto M."/>
            <person name="Hiraoka Y."/>
            <person name="Horinouchi S."/>
            <person name="Yoshida M."/>
        </authorList>
    </citation>
    <scope>SUBCELLULAR LOCATION [LARGE SCALE ANALYSIS]</scope>
</reference>
<reference key="3">
    <citation type="journal article" date="2008" name="J. Proteome Res.">
        <title>Phosphoproteome analysis of fission yeast.</title>
        <authorList>
            <person name="Wilson-Grady J.T."/>
            <person name="Villen J."/>
            <person name="Gygi S.P."/>
        </authorList>
    </citation>
    <scope>PHOSPHORYLATION [LARGE SCALE ANALYSIS] AT SER-175</scope>
    <scope>IDENTIFICATION BY MASS SPECTROMETRY</scope>
</reference>
<comment type="function">
    <text evidence="1">Component of the HIR complex, which functions as a histone chaperone that cooperates with cia1/asf1 to promote replication-independent chromatin assembly.</text>
</comment>
<comment type="subunit">
    <text evidence="1">Component of the HIR complex.</text>
</comment>
<comment type="subcellular location">
    <subcellularLocation>
        <location evidence="3">Nucleus</location>
    </subcellularLocation>
</comment>
<comment type="similarity">
    <text evidence="5">Belongs to the HPC2 family.</text>
</comment>
<gene>
    <name type="primary">hpc2</name>
    <name type="ORF">SPBC947.08c</name>
</gene>
<proteinExistence type="evidence at protein level"/>
<accession>O43083</accession>
<protein>
    <recommendedName>
        <fullName>Histone promoter control protein 2</fullName>
    </recommendedName>
</protein>
<sequence>MSLLSGDQRIICLEIPLQGKENVHINFAKEVEKLYGPSVQENSKKNDLSDSADSEGESTHVDEQQAANGAADGTQTIKKKKRKRRYADEYYDRTDPFIDDAELYIEEKAAATKDGFFVFSGPLVAEGDTVKIERSKKTKKKKKTSLSNATHPAPAVSAVVASADASFDDSRDIESEDEQPLRTLSIEMAAKNALKEAKRENAKVPKDVSKKEAKTTKSKEKATKKTSSSVPKQSTGENTKKAVKLETPLTSTPPIPPLSEPKHSPATVNEHISPPSALTNPSTEELKPSTSLPIDQGNASVVSKPTQQVSIVLSQNASLPVDEHQAEPEKSIPTSSIP</sequence>